<proteinExistence type="evidence at protein level"/>
<accession>F1SY52</accession>
<comment type="function">
    <text evidence="4">Cytochrome P450 monooxygenase that is able to use trans-stilbene as a substrate for oxidation.</text>
</comment>
<comment type="cofactor">
    <cofactor evidence="1">
        <name>heme</name>
        <dbReference type="ChEBI" id="CHEBI:30413"/>
    </cofactor>
</comment>
<comment type="pathway">
    <text evidence="6">Secondary metabolite biosynthesis.</text>
</comment>
<comment type="subcellular location">
    <subcellularLocation>
        <location evidence="2">Membrane</location>
        <topology evidence="2">Single-pass membrane protein</topology>
    </subcellularLocation>
</comment>
<comment type="similarity">
    <text evidence="6">Belongs to the cytochrome P450 family.</text>
</comment>
<feature type="chain" id="PRO_0000451397" description="Cytochrome P450 monooxygenase 45">
    <location>
        <begin position="1"/>
        <end position="529"/>
    </location>
</feature>
<feature type="transmembrane region" description="Helical" evidence="2">
    <location>
        <begin position="24"/>
        <end position="44"/>
    </location>
</feature>
<feature type="binding site" description="axial binding residue" evidence="1">
    <location>
        <position position="454"/>
    </location>
    <ligand>
        <name>heme</name>
        <dbReference type="ChEBI" id="CHEBI:30413"/>
    </ligand>
    <ligandPart>
        <name>Fe</name>
        <dbReference type="ChEBI" id="CHEBI:18248"/>
    </ligandPart>
</feature>
<feature type="glycosylation site" description="N-linked (GlcNAc...) asparagine" evidence="3">
    <location>
        <position position="185"/>
    </location>
</feature>
<feature type="glycosylation site" description="N-linked (GlcNAc...) asparagine" evidence="3">
    <location>
        <position position="322"/>
    </location>
</feature>
<evidence type="ECO:0000250" key="1">
    <source>
        <dbReference type="UniProtKB" id="P04798"/>
    </source>
</evidence>
<evidence type="ECO:0000255" key="2"/>
<evidence type="ECO:0000255" key="3">
    <source>
        <dbReference type="PROSITE-ProRule" id="PRU00498"/>
    </source>
</evidence>
<evidence type="ECO:0000269" key="4">
    <source>
    </source>
</evidence>
<evidence type="ECO:0000303" key="5">
    <source>
    </source>
</evidence>
<evidence type="ECO:0000305" key="6"/>
<reference key="1">
    <citation type="journal article" date="2012" name="Arch. Microbiol.">
        <title>Molecular identification and functional characterization of cytochrome P450 monooxygenases from the brown-rot basidiomycete Postia placenta.</title>
        <authorList>
            <person name="Ide M."/>
            <person name="Ichinose H."/>
            <person name="Wariishi H."/>
        </authorList>
    </citation>
    <scope>NUCLEOTIDE SEQUENCE [MRNA]</scope>
    <scope>IDENTIFICATION</scope>
    <scope>FUNCTION</scope>
    <scope>CATALYTIC ACTIVITY</scope>
    <source>
        <strain>ATCC 44394 / Madison 698-R</strain>
    </source>
</reference>
<sequence>MHSVLAQAASGALSFELRLGQSSVLTICILALLTFVLREIVLYFTRHSMPPGPFRWPLIGNALQLPQDHPWVKYTEWAKMYGPLMQLDVLGQHMLVITSAQTARDLMEKRSSIYSDRPHLVMAGDLAGFGDTLILQNYGEEFRYQRKLVSHSFSPSVIHRYYDLQEAAARRLVLAIIEDPDSLENSTRLHIASIILRMTYGYTVKGVDDPLFTTGIAVINGFSEATRPGAWPVDFVPILQYVPHWVPGFVFTRKAREWRGVLERAMWAPYHWCKENYARDAAHGLCLCGSILAAEGSQLSSDQEWLFVNAAVTVMGGGLDTNISTILSFVLAMLRFPEVQKKAQAEIDAVIGPNRLPLISDRHSLPYVRSVVTEVYRWIPAVPLGIPHALRQDDHYDGLFLSKGSVVVPNVWGMLHDPSIYPAPHEFKPERYGGLDAEMTKVTDIAFGFGRRACPGFYFAEGTIFAIVATVLAICDVVPTVDEHGQEVIPEVSLTSGAIVSPENVKCAFRPRSGRVKDILVEAVETEQE</sequence>
<protein>
    <recommendedName>
        <fullName evidence="5">Cytochrome P450 monooxygenase 45</fullName>
        <ecNumber evidence="4">1.-.-.-</ecNumber>
    </recommendedName>
</protein>
<keyword id="KW-0325">Glycoprotein</keyword>
<keyword id="KW-0349">Heme</keyword>
<keyword id="KW-0408">Iron</keyword>
<keyword id="KW-0472">Membrane</keyword>
<keyword id="KW-0479">Metal-binding</keyword>
<keyword id="KW-0503">Monooxygenase</keyword>
<keyword id="KW-0560">Oxidoreductase</keyword>
<keyword id="KW-0812">Transmembrane</keyword>
<keyword id="KW-1133">Transmembrane helix</keyword>
<name>CY045_POSPM</name>
<dbReference type="EC" id="1.-.-.-" evidence="4"/>
<dbReference type="EMBL" id="AB573263">
    <property type="protein sequence ID" value="BAK09396.1"/>
    <property type="molecule type" value="mRNA"/>
</dbReference>
<dbReference type="EMBL" id="AB623253">
    <property type="protein sequence ID" value="BAK20189.1"/>
    <property type="molecule type" value="mRNA"/>
</dbReference>
<dbReference type="SMR" id="F1SY52"/>
<dbReference type="GlyCosmos" id="F1SY52">
    <property type="glycosylation" value="2 sites, No reported glycans"/>
</dbReference>
<dbReference type="GO" id="GO:0016020">
    <property type="term" value="C:membrane"/>
    <property type="evidence" value="ECO:0007669"/>
    <property type="project" value="UniProtKB-SubCell"/>
</dbReference>
<dbReference type="GO" id="GO:0020037">
    <property type="term" value="F:heme binding"/>
    <property type="evidence" value="ECO:0007669"/>
    <property type="project" value="InterPro"/>
</dbReference>
<dbReference type="GO" id="GO:0005506">
    <property type="term" value="F:iron ion binding"/>
    <property type="evidence" value="ECO:0007669"/>
    <property type="project" value="InterPro"/>
</dbReference>
<dbReference type="GO" id="GO:0004497">
    <property type="term" value="F:monooxygenase activity"/>
    <property type="evidence" value="ECO:0007669"/>
    <property type="project" value="UniProtKB-KW"/>
</dbReference>
<dbReference type="GO" id="GO:0016705">
    <property type="term" value="F:oxidoreductase activity, acting on paired donors, with incorporation or reduction of molecular oxygen"/>
    <property type="evidence" value="ECO:0007669"/>
    <property type="project" value="InterPro"/>
</dbReference>
<dbReference type="CDD" id="cd11065">
    <property type="entry name" value="CYP64-like"/>
    <property type="match status" value="1"/>
</dbReference>
<dbReference type="Gene3D" id="1.10.630.10">
    <property type="entry name" value="Cytochrome P450"/>
    <property type="match status" value="1"/>
</dbReference>
<dbReference type="InterPro" id="IPR001128">
    <property type="entry name" value="Cyt_P450"/>
</dbReference>
<dbReference type="InterPro" id="IPR017972">
    <property type="entry name" value="Cyt_P450_CS"/>
</dbReference>
<dbReference type="InterPro" id="IPR002401">
    <property type="entry name" value="Cyt_P450_E_grp-I"/>
</dbReference>
<dbReference type="InterPro" id="IPR036396">
    <property type="entry name" value="Cyt_P450_sf"/>
</dbReference>
<dbReference type="InterPro" id="IPR050364">
    <property type="entry name" value="Cytochrome_P450_fung"/>
</dbReference>
<dbReference type="PANTHER" id="PTHR46300:SF7">
    <property type="entry name" value="P450, PUTATIVE (EUROFUNG)-RELATED"/>
    <property type="match status" value="1"/>
</dbReference>
<dbReference type="PANTHER" id="PTHR46300">
    <property type="entry name" value="P450, PUTATIVE (EUROFUNG)-RELATED-RELATED"/>
    <property type="match status" value="1"/>
</dbReference>
<dbReference type="Pfam" id="PF00067">
    <property type="entry name" value="p450"/>
    <property type="match status" value="1"/>
</dbReference>
<dbReference type="PRINTS" id="PR00463">
    <property type="entry name" value="EP450I"/>
</dbReference>
<dbReference type="SUPFAM" id="SSF48264">
    <property type="entry name" value="Cytochrome P450"/>
    <property type="match status" value="1"/>
</dbReference>
<dbReference type="PROSITE" id="PS00086">
    <property type="entry name" value="CYTOCHROME_P450"/>
    <property type="match status" value="1"/>
</dbReference>
<gene>
    <name evidence="5" type="primary">CYP045</name>
    <name evidence="5" type="synonym">CYP251</name>
    <name evidence="5" type="synonym">CYP5350B3v1</name>
    <name evidence="5" type="synonym">CYP5350B3v2</name>
</gene>
<organism>
    <name type="scientific">Postia placenta (strain ATCC 44394 / Madison 698-R)</name>
    <name type="common">Brown rot fungus</name>
    <name type="synonym">Poria monticola</name>
    <dbReference type="NCBI Taxonomy" id="561896"/>
    <lineage>
        <taxon>Eukaryota</taxon>
        <taxon>Fungi</taxon>
        <taxon>Dikarya</taxon>
        <taxon>Basidiomycota</taxon>
        <taxon>Agaricomycotina</taxon>
        <taxon>Agaricomycetes</taxon>
        <taxon>Polyporales</taxon>
        <taxon>Adustoporiaceae</taxon>
        <taxon>Rhodonia</taxon>
    </lineage>
</organism>